<feature type="chain" id="PRO_1000020351" description="Threonine--tRNA ligase">
    <location>
        <begin position="1"/>
        <end position="635"/>
    </location>
</feature>
<feature type="domain" description="TGS" evidence="2">
    <location>
        <begin position="1"/>
        <end position="61"/>
    </location>
</feature>
<feature type="region of interest" description="Catalytic" evidence="1">
    <location>
        <begin position="242"/>
        <end position="533"/>
    </location>
</feature>
<feature type="binding site" evidence="1">
    <location>
        <position position="333"/>
    </location>
    <ligand>
        <name>Zn(2+)</name>
        <dbReference type="ChEBI" id="CHEBI:29105"/>
    </ligand>
</feature>
<feature type="binding site" evidence="1">
    <location>
        <position position="384"/>
    </location>
    <ligand>
        <name>Zn(2+)</name>
        <dbReference type="ChEBI" id="CHEBI:29105"/>
    </ligand>
</feature>
<feature type="binding site" evidence="1">
    <location>
        <position position="510"/>
    </location>
    <ligand>
        <name>Zn(2+)</name>
        <dbReference type="ChEBI" id="CHEBI:29105"/>
    </ligand>
</feature>
<comment type="function">
    <text evidence="1">Catalyzes the attachment of threonine to tRNA(Thr) in a two-step reaction: L-threonine is first activated by ATP to form Thr-AMP and then transferred to the acceptor end of tRNA(Thr). Also edits incorrectly charged L-seryl-tRNA(Thr).</text>
</comment>
<comment type="catalytic activity">
    <reaction evidence="1">
        <text>tRNA(Thr) + L-threonine + ATP = L-threonyl-tRNA(Thr) + AMP + diphosphate + H(+)</text>
        <dbReference type="Rhea" id="RHEA:24624"/>
        <dbReference type="Rhea" id="RHEA-COMP:9670"/>
        <dbReference type="Rhea" id="RHEA-COMP:9704"/>
        <dbReference type="ChEBI" id="CHEBI:15378"/>
        <dbReference type="ChEBI" id="CHEBI:30616"/>
        <dbReference type="ChEBI" id="CHEBI:33019"/>
        <dbReference type="ChEBI" id="CHEBI:57926"/>
        <dbReference type="ChEBI" id="CHEBI:78442"/>
        <dbReference type="ChEBI" id="CHEBI:78534"/>
        <dbReference type="ChEBI" id="CHEBI:456215"/>
        <dbReference type="EC" id="6.1.1.3"/>
    </reaction>
</comment>
<comment type="cofactor">
    <cofactor evidence="1">
        <name>Zn(2+)</name>
        <dbReference type="ChEBI" id="CHEBI:29105"/>
    </cofactor>
    <text evidence="1">Binds 1 zinc ion per subunit.</text>
</comment>
<comment type="subunit">
    <text evidence="1">Homodimer.</text>
</comment>
<comment type="subcellular location">
    <subcellularLocation>
        <location evidence="1">Cytoplasm</location>
    </subcellularLocation>
</comment>
<comment type="similarity">
    <text evidence="1">Belongs to the class-II aminoacyl-tRNA synthetase family.</text>
</comment>
<evidence type="ECO:0000255" key="1">
    <source>
        <dbReference type="HAMAP-Rule" id="MF_00184"/>
    </source>
</evidence>
<evidence type="ECO:0000255" key="2">
    <source>
        <dbReference type="PROSITE-ProRule" id="PRU01228"/>
    </source>
</evidence>
<protein>
    <recommendedName>
        <fullName evidence="1">Threonine--tRNA ligase</fullName>
        <ecNumber evidence="1">6.1.1.3</ecNumber>
    </recommendedName>
    <alternativeName>
        <fullName evidence="1">Threonyl-tRNA synthetase</fullName>
        <shortName evidence="1">ThrRS</shortName>
    </alternativeName>
</protein>
<name>SYT_BURCM</name>
<dbReference type="EC" id="6.1.1.3" evidence="1"/>
<dbReference type="EMBL" id="CP000440">
    <property type="protein sequence ID" value="ABI86917.1"/>
    <property type="molecule type" value="Genomic_DNA"/>
</dbReference>
<dbReference type="RefSeq" id="WP_011656673.1">
    <property type="nucleotide sequence ID" value="NZ_CP009798.1"/>
</dbReference>
<dbReference type="SMR" id="Q0BG06"/>
<dbReference type="GeneID" id="93083240"/>
<dbReference type="KEGG" id="bam:Bamb_1359"/>
<dbReference type="PATRIC" id="fig|339670.21.peg.186"/>
<dbReference type="eggNOG" id="COG0441">
    <property type="taxonomic scope" value="Bacteria"/>
</dbReference>
<dbReference type="Proteomes" id="UP000000662">
    <property type="component" value="Chromosome 1"/>
</dbReference>
<dbReference type="GO" id="GO:0005829">
    <property type="term" value="C:cytosol"/>
    <property type="evidence" value="ECO:0007669"/>
    <property type="project" value="TreeGrafter"/>
</dbReference>
<dbReference type="GO" id="GO:0005524">
    <property type="term" value="F:ATP binding"/>
    <property type="evidence" value="ECO:0007669"/>
    <property type="project" value="UniProtKB-UniRule"/>
</dbReference>
<dbReference type="GO" id="GO:0046872">
    <property type="term" value="F:metal ion binding"/>
    <property type="evidence" value="ECO:0007669"/>
    <property type="project" value="UniProtKB-KW"/>
</dbReference>
<dbReference type="GO" id="GO:0004829">
    <property type="term" value="F:threonine-tRNA ligase activity"/>
    <property type="evidence" value="ECO:0007669"/>
    <property type="project" value="UniProtKB-UniRule"/>
</dbReference>
<dbReference type="GO" id="GO:0000049">
    <property type="term" value="F:tRNA binding"/>
    <property type="evidence" value="ECO:0007669"/>
    <property type="project" value="UniProtKB-KW"/>
</dbReference>
<dbReference type="GO" id="GO:0006435">
    <property type="term" value="P:threonyl-tRNA aminoacylation"/>
    <property type="evidence" value="ECO:0007669"/>
    <property type="project" value="UniProtKB-UniRule"/>
</dbReference>
<dbReference type="CDD" id="cd01667">
    <property type="entry name" value="TGS_ThrRS"/>
    <property type="match status" value="1"/>
</dbReference>
<dbReference type="CDD" id="cd00860">
    <property type="entry name" value="ThrRS_anticodon"/>
    <property type="match status" value="1"/>
</dbReference>
<dbReference type="CDD" id="cd00771">
    <property type="entry name" value="ThrRS_core"/>
    <property type="match status" value="1"/>
</dbReference>
<dbReference type="FunFam" id="3.10.20.30:FF:000005">
    <property type="entry name" value="Threonine--tRNA ligase"/>
    <property type="match status" value="1"/>
</dbReference>
<dbReference type="FunFam" id="3.30.54.20:FF:000002">
    <property type="entry name" value="Threonine--tRNA ligase"/>
    <property type="match status" value="1"/>
</dbReference>
<dbReference type="FunFam" id="3.30.930.10:FF:000002">
    <property type="entry name" value="Threonine--tRNA ligase"/>
    <property type="match status" value="1"/>
</dbReference>
<dbReference type="FunFam" id="3.40.50.800:FF:000001">
    <property type="entry name" value="Threonine--tRNA ligase"/>
    <property type="match status" value="1"/>
</dbReference>
<dbReference type="FunFam" id="3.30.980.10:FF:000005">
    <property type="entry name" value="Threonyl-tRNA synthetase, mitochondrial"/>
    <property type="match status" value="1"/>
</dbReference>
<dbReference type="Gene3D" id="3.10.20.30">
    <property type="match status" value="1"/>
</dbReference>
<dbReference type="Gene3D" id="3.30.54.20">
    <property type="match status" value="1"/>
</dbReference>
<dbReference type="Gene3D" id="3.40.50.800">
    <property type="entry name" value="Anticodon-binding domain"/>
    <property type="match status" value="1"/>
</dbReference>
<dbReference type="Gene3D" id="3.30.930.10">
    <property type="entry name" value="Bira Bifunctional Protein, Domain 2"/>
    <property type="match status" value="1"/>
</dbReference>
<dbReference type="Gene3D" id="3.30.980.10">
    <property type="entry name" value="Threonyl-trna Synthetase, Chain A, domain 2"/>
    <property type="match status" value="1"/>
</dbReference>
<dbReference type="HAMAP" id="MF_00184">
    <property type="entry name" value="Thr_tRNA_synth"/>
    <property type="match status" value="1"/>
</dbReference>
<dbReference type="InterPro" id="IPR002314">
    <property type="entry name" value="aa-tRNA-synt_IIb"/>
</dbReference>
<dbReference type="InterPro" id="IPR006195">
    <property type="entry name" value="aa-tRNA-synth_II"/>
</dbReference>
<dbReference type="InterPro" id="IPR045864">
    <property type="entry name" value="aa-tRNA-synth_II/BPL/LPL"/>
</dbReference>
<dbReference type="InterPro" id="IPR004154">
    <property type="entry name" value="Anticodon-bd"/>
</dbReference>
<dbReference type="InterPro" id="IPR036621">
    <property type="entry name" value="Anticodon-bd_dom_sf"/>
</dbReference>
<dbReference type="InterPro" id="IPR012675">
    <property type="entry name" value="Beta-grasp_dom_sf"/>
</dbReference>
<dbReference type="InterPro" id="IPR004095">
    <property type="entry name" value="TGS"/>
</dbReference>
<dbReference type="InterPro" id="IPR012676">
    <property type="entry name" value="TGS-like"/>
</dbReference>
<dbReference type="InterPro" id="IPR002320">
    <property type="entry name" value="Thr-tRNA-ligase_IIa"/>
</dbReference>
<dbReference type="InterPro" id="IPR018163">
    <property type="entry name" value="Thr/Ala-tRNA-synth_IIc_edit"/>
</dbReference>
<dbReference type="InterPro" id="IPR047246">
    <property type="entry name" value="ThrRS_anticodon"/>
</dbReference>
<dbReference type="InterPro" id="IPR033728">
    <property type="entry name" value="ThrRS_core"/>
</dbReference>
<dbReference type="InterPro" id="IPR012947">
    <property type="entry name" value="tRNA_SAD"/>
</dbReference>
<dbReference type="NCBIfam" id="TIGR00418">
    <property type="entry name" value="thrS"/>
    <property type="match status" value="1"/>
</dbReference>
<dbReference type="PANTHER" id="PTHR11451:SF44">
    <property type="entry name" value="THREONINE--TRNA LIGASE, CHLOROPLASTIC_MITOCHONDRIAL 2"/>
    <property type="match status" value="1"/>
</dbReference>
<dbReference type="PANTHER" id="PTHR11451">
    <property type="entry name" value="THREONINE-TRNA LIGASE"/>
    <property type="match status" value="1"/>
</dbReference>
<dbReference type="Pfam" id="PF03129">
    <property type="entry name" value="HGTP_anticodon"/>
    <property type="match status" value="1"/>
</dbReference>
<dbReference type="Pfam" id="PF02824">
    <property type="entry name" value="TGS"/>
    <property type="match status" value="1"/>
</dbReference>
<dbReference type="Pfam" id="PF00587">
    <property type="entry name" value="tRNA-synt_2b"/>
    <property type="match status" value="1"/>
</dbReference>
<dbReference type="Pfam" id="PF07973">
    <property type="entry name" value="tRNA_SAD"/>
    <property type="match status" value="1"/>
</dbReference>
<dbReference type="PRINTS" id="PR01047">
    <property type="entry name" value="TRNASYNTHTHR"/>
</dbReference>
<dbReference type="SMART" id="SM00863">
    <property type="entry name" value="tRNA_SAD"/>
    <property type="match status" value="1"/>
</dbReference>
<dbReference type="SUPFAM" id="SSF52954">
    <property type="entry name" value="Class II aaRS ABD-related"/>
    <property type="match status" value="1"/>
</dbReference>
<dbReference type="SUPFAM" id="SSF55681">
    <property type="entry name" value="Class II aaRS and biotin synthetases"/>
    <property type="match status" value="1"/>
</dbReference>
<dbReference type="SUPFAM" id="SSF81271">
    <property type="entry name" value="TGS-like"/>
    <property type="match status" value="1"/>
</dbReference>
<dbReference type="SUPFAM" id="SSF55186">
    <property type="entry name" value="ThrRS/AlaRS common domain"/>
    <property type="match status" value="1"/>
</dbReference>
<dbReference type="PROSITE" id="PS50862">
    <property type="entry name" value="AA_TRNA_LIGASE_II"/>
    <property type="match status" value="1"/>
</dbReference>
<dbReference type="PROSITE" id="PS51880">
    <property type="entry name" value="TGS"/>
    <property type="match status" value="1"/>
</dbReference>
<accession>Q0BG06</accession>
<gene>
    <name evidence="1" type="primary">thrS</name>
    <name type="ordered locus">Bamb_1359</name>
</gene>
<organism>
    <name type="scientific">Burkholderia ambifaria (strain ATCC BAA-244 / DSM 16087 / CCUG 44356 / LMG 19182 / AMMD)</name>
    <name type="common">Burkholderia cepacia (strain AMMD)</name>
    <dbReference type="NCBI Taxonomy" id="339670"/>
    <lineage>
        <taxon>Bacteria</taxon>
        <taxon>Pseudomonadati</taxon>
        <taxon>Pseudomonadota</taxon>
        <taxon>Betaproteobacteria</taxon>
        <taxon>Burkholderiales</taxon>
        <taxon>Burkholderiaceae</taxon>
        <taxon>Burkholderia</taxon>
        <taxon>Burkholderia cepacia complex</taxon>
    </lineage>
</organism>
<reference key="1">
    <citation type="submission" date="2006-08" db="EMBL/GenBank/DDBJ databases">
        <title>Complete sequence of chromosome 1 of Burkholderia cepacia AMMD.</title>
        <authorList>
            <person name="Copeland A."/>
            <person name="Lucas S."/>
            <person name="Lapidus A."/>
            <person name="Barry K."/>
            <person name="Detter J.C."/>
            <person name="Glavina del Rio T."/>
            <person name="Hammon N."/>
            <person name="Israni S."/>
            <person name="Pitluck S."/>
            <person name="Bruce D."/>
            <person name="Chain P."/>
            <person name="Malfatti S."/>
            <person name="Shin M."/>
            <person name="Vergez L."/>
            <person name="Schmutz J."/>
            <person name="Larimer F."/>
            <person name="Land M."/>
            <person name="Hauser L."/>
            <person name="Kyrpides N."/>
            <person name="Kim E."/>
            <person name="Parke J."/>
            <person name="Coenye T."/>
            <person name="Konstantinidis K."/>
            <person name="Ramette A."/>
            <person name="Tiedje J."/>
            <person name="Richardson P."/>
        </authorList>
    </citation>
    <scope>NUCLEOTIDE SEQUENCE [LARGE SCALE GENOMIC DNA]</scope>
    <source>
        <strain>ATCC BAA-244 / DSM 16087 / CCUG 44356 / LMG 19182 / AMMD</strain>
    </source>
</reference>
<keyword id="KW-0030">Aminoacyl-tRNA synthetase</keyword>
<keyword id="KW-0067">ATP-binding</keyword>
<keyword id="KW-0963">Cytoplasm</keyword>
<keyword id="KW-0436">Ligase</keyword>
<keyword id="KW-0479">Metal-binding</keyword>
<keyword id="KW-0547">Nucleotide-binding</keyword>
<keyword id="KW-0648">Protein biosynthesis</keyword>
<keyword id="KW-0694">RNA-binding</keyword>
<keyword id="KW-0820">tRNA-binding</keyword>
<keyword id="KW-0862">Zinc</keyword>
<proteinExistence type="inferred from homology"/>
<sequence>MVSIRLPDGSVRQYEHPVTVAEVAASIGPGLAKAALGGKLDGELVDTSTVIDRDAALAIITDKDADGLDIIRHSTAHLLAYAVKELYPDAQVTIGPVIDNGFYYDFSYNRPFTPEDLEKIEKRMQEIAKKDEPVTRRVVSRDEAAGYFRSIGEKYKAEIIESIPQTDEIKLYSHGGFTDLCRGPHVPSTGKLKVFKLMKVAGAYWRGDSKNEQLQRIYGTAWTKKEDQDQYLHMLEEAEKRDHRKLGKQLDLFHMQEESPGMVFWHPKGWALWQQVEQYMRRRVNDAGYLEIKTPMIMDRSLWEASGHWQNYRENMFTTESEKRDYAIKPMNCPGHVQVFKHGLRSYRDLPLRYAEFGSCHRNEASGALHGLMRVRGFVQDDAHIFCTEEQFIAESIAFNTLAMSVYKDFGFEHIDIKLSLRPEQRAGTDETWDRAEQGLRDALTACGLSWEELPGEGAFYGPKIEYHIKDALGRSWQCGTLQLDMVLPERLGAEYVAEDNSRRRPVMLHRAIVGSMERFLGILIEHHAGAMPAWLAPFQAVVLNIAESQVEYAHSLTQTLQKQGVRVAGDLRNEKISYKIREHTLEKVPYLLVVGDKERDAQTVAVRARGGVDLGVMPIEAFVERLQEDLRSFK</sequence>